<reference key="1">
    <citation type="journal article" date="2008" name="PLoS ONE">
        <title>A recalibrated molecular clock and independent origins for the cholera pandemic clones.</title>
        <authorList>
            <person name="Feng L."/>
            <person name="Reeves P.R."/>
            <person name="Lan R."/>
            <person name="Ren Y."/>
            <person name="Gao C."/>
            <person name="Zhou Z."/>
            <person name="Ren Y."/>
            <person name="Cheng J."/>
            <person name="Wang W."/>
            <person name="Wang J."/>
            <person name="Qian W."/>
            <person name="Li D."/>
            <person name="Wang L."/>
        </authorList>
    </citation>
    <scope>NUCLEOTIDE SEQUENCE [LARGE SCALE GENOMIC DNA]</scope>
    <source>
        <strain>M66-2</strain>
    </source>
</reference>
<sequence>MKASILSKLESLVERYEEVQHLLGDPTVIGDQNKFRALSKEYSQLEEITQCFQAYQQAKEDLVAAEEMAQEDDAEMREMAQDEIKAAKAAIERLTDELQILLLPKDPNDDRNCFLEIRAGAGGDEAGIFAGDLFRMYSRFAEKKGWRIEVMSSSEAEHGGYKEMIAKVNGDGAYGTLKFESGGHRVQRVPATEAQGRIHTSACTVAVMPEIPEAEIPEIKASDLKIDTFRSSGAGGQHVNTTDSAIRITHLPTGIVVECQDERSQHKNKAKAMSVLAARIAQAEESKRAAEISDTRRNLLGSGDRSDRIRTYNYPQGRVSDHRINLTVYRLTEVMEGDMQSLIDPVIHEHQADQLAALADQN</sequence>
<organism>
    <name type="scientific">Vibrio cholerae serotype O1 (strain M66-2)</name>
    <dbReference type="NCBI Taxonomy" id="579112"/>
    <lineage>
        <taxon>Bacteria</taxon>
        <taxon>Pseudomonadati</taxon>
        <taxon>Pseudomonadota</taxon>
        <taxon>Gammaproteobacteria</taxon>
        <taxon>Vibrionales</taxon>
        <taxon>Vibrionaceae</taxon>
        <taxon>Vibrio</taxon>
    </lineage>
</organism>
<keyword id="KW-0963">Cytoplasm</keyword>
<keyword id="KW-0488">Methylation</keyword>
<keyword id="KW-0648">Protein biosynthesis</keyword>
<accession>C3LPI4</accession>
<gene>
    <name evidence="1" type="primary">prfA</name>
    <name type="ordered locus">VCM66_2102</name>
</gene>
<proteinExistence type="inferred from homology"/>
<name>RF1_VIBCM</name>
<evidence type="ECO:0000255" key="1">
    <source>
        <dbReference type="HAMAP-Rule" id="MF_00093"/>
    </source>
</evidence>
<evidence type="ECO:0000256" key="2">
    <source>
        <dbReference type="SAM" id="MobiDB-lite"/>
    </source>
</evidence>
<dbReference type="EMBL" id="CP001233">
    <property type="protein sequence ID" value="ACP06404.1"/>
    <property type="molecule type" value="Genomic_DNA"/>
</dbReference>
<dbReference type="RefSeq" id="WP_000647701.1">
    <property type="nucleotide sequence ID" value="NC_012578.1"/>
</dbReference>
<dbReference type="SMR" id="C3LPI4"/>
<dbReference type="GeneID" id="89513845"/>
<dbReference type="KEGG" id="vcm:VCM66_2102"/>
<dbReference type="HOGENOM" id="CLU_036856_0_1_6"/>
<dbReference type="Proteomes" id="UP000001217">
    <property type="component" value="Chromosome I"/>
</dbReference>
<dbReference type="GO" id="GO:0005737">
    <property type="term" value="C:cytoplasm"/>
    <property type="evidence" value="ECO:0007669"/>
    <property type="project" value="UniProtKB-SubCell"/>
</dbReference>
<dbReference type="GO" id="GO:0016149">
    <property type="term" value="F:translation release factor activity, codon specific"/>
    <property type="evidence" value="ECO:0007669"/>
    <property type="project" value="UniProtKB-UniRule"/>
</dbReference>
<dbReference type="FunFam" id="3.30.160.20:FF:000004">
    <property type="entry name" value="Peptide chain release factor 1"/>
    <property type="match status" value="1"/>
</dbReference>
<dbReference type="FunFam" id="3.30.70.1660:FF:000002">
    <property type="entry name" value="Peptide chain release factor 1"/>
    <property type="match status" value="1"/>
</dbReference>
<dbReference type="FunFam" id="3.30.70.1660:FF:000004">
    <property type="entry name" value="Peptide chain release factor 1"/>
    <property type="match status" value="1"/>
</dbReference>
<dbReference type="Gene3D" id="3.30.160.20">
    <property type="match status" value="1"/>
</dbReference>
<dbReference type="Gene3D" id="3.30.70.1660">
    <property type="match status" value="1"/>
</dbReference>
<dbReference type="Gene3D" id="6.10.140.1950">
    <property type="match status" value="1"/>
</dbReference>
<dbReference type="HAMAP" id="MF_00093">
    <property type="entry name" value="Rel_fac_1"/>
    <property type="match status" value="1"/>
</dbReference>
<dbReference type="InterPro" id="IPR005139">
    <property type="entry name" value="PCRF"/>
</dbReference>
<dbReference type="InterPro" id="IPR000352">
    <property type="entry name" value="Pep_chain_release_fac_I"/>
</dbReference>
<dbReference type="InterPro" id="IPR045853">
    <property type="entry name" value="Pep_chain_release_fac_I_sf"/>
</dbReference>
<dbReference type="InterPro" id="IPR050057">
    <property type="entry name" value="Prokaryotic/Mito_RF"/>
</dbReference>
<dbReference type="InterPro" id="IPR004373">
    <property type="entry name" value="RF-1"/>
</dbReference>
<dbReference type="NCBIfam" id="TIGR00019">
    <property type="entry name" value="prfA"/>
    <property type="match status" value="1"/>
</dbReference>
<dbReference type="NCBIfam" id="NF001859">
    <property type="entry name" value="PRK00591.1"/>
    <property type="match status" value="1"/>
</dbReference>
<dbReference type="PANTHER" id="PTHR43804">
    <property type="entry name" value="LD18447P"/>
    <property type="match status" value="1"/>
</dbReference>
<dbReference type="PANTHER" id="PTHR43804:SF7">
    <property type="entry name" value="LD18447P"/>
    <property type="match status" value="1"/>
</dbReference>
<dbReference type="Pfam" id="PF03462">
    <property type="entry name" value="PCRF"/>
    <property type="match status" value="1"/>
</dbReference>
<dbReference type="Pfam" id="PF00472">
    <property type="entry name" value="RF-1"/>
    <property type="match status" value="1"/>
</dbReference>
<dbReference type="SMART" id="SM00937">
    <property type="entry name" value="PCRF"/>
    <property type="match status" value="1"/>
</dbReference>
<dbReference type="SUPFAM" id="SSF75620">
    <property type="entry name" value="Release factor"/>
    <property type="match status" value="1"/>
</dbReference>
<dbReference type="PROSITE" id="PS00745">
    <property type="entry name" value="RF_PROK_I"/>
    <property type="match status" value="1"/>
</dbReference>
<protein>
    <recommendedName>
        <fullName evidence="1">Peptide chain release factor 1</fullName>
        <shortName evidence="1">RF-1</shortName>
    </recommendedName>
</protein>
<feature type="chain" id="PRO_1000193513" description="Peptide chain release factor 1">
    <location>
        <begin position="1"/>
        <end position="362"/>
    </location>
</feature>
<feature type="region of interest" description="Disordered" evidence="2">
    <location>
        <begin position="289"/>
        <end position="308"/>
    </location>
</feature>
<feature type="modified residue" description="N5-methylglutamine" evidence="1">
    <location>
        <position position="237"/>
    </location>
</feature>
<comment type="function">
    <text evidence="1">Peptide chain release factor 1 directs the termination of translation in response to the peptide chain termination codons UAG and UAA.</text>
</comment>
<comment type="subcellular location">
    <subcellularLocation>
        <location evidence="1">Cytoplasm</location>
    </subcellularLocation>
</comment>
<comment type="PTM">
    <text evidence="1">Methylated by PrmC. Methylation increases the termination efficiency of RF1.</text>
</comment>
<comment type="similarity">
    <text evidence="1">Belongs to the prokaryotic/mitochondrial release factor family.</text>
</comment>